<geneLocation type="chloroplast"/>
<reference key="1">
    <citation type="submission" date="2007-03" db="EMBL/GenBank/DDBJ databases">
        <title>Sequencing analysis of Lobularia maritima chloroplast DNA.</title>
        <authorList>
            <person name="Hosouchi T."/>
            <person name="Tsuruoka H."/>
            <person name="Kotani H."/>
        </authorList>
    </citation>
    <scope>NUCLEOTIDE SEQUENCE [LARGE SCALE GENOMIC DNA]</scope>
</reference>
<evidence type="ECO:0000250" key="1"/>
<evidence type="ECO:0000305" key="2"/>
<sequence>MIKKKNKKSYTSVYALGQYISMSTHKARRVIDQIRGRSYEEALMILELMPYRGCYPIFKLVYSAAANASHNKGFKETNLVISKAEVNQGNTVKKLKPRARGRSYPIKRSTCHITIVLEDISFYEQYKEYDEYFMYLKKPGSSNENKNLTCYDTYSSGGLWDKK</sequence>
<feature type="chain" id="PRO_0000354580" description="Large ribosomal subunit protein uL22c">
    <location>
        <begin position="1"/>
        <end position="163"/>
    </location>
</feature>
<protein>
    <recommendedName>
        <fullName evidence="2">Large ribosomal subunit protein uL22c</fullName>
    </recommendedName>
    <alternativeName>
        <fullName>50S ribosomal protein L22, chloroplastic</fullName>
    </alternativeName>
</protein>
<dbReference type="EMBL" id="AP009375">
    <property type="protein sequence ID" value="BAF50588.1"/>
    <property type="molecule type" value="Genomic_DNA"/>
</dbReference>
<dbReference type="RefSeq" id="YP_001123764.1">
    <property type="nucleotide sequence ID" value="NC_009274.1"/>
</dbReference>
<dbReference type="SMR" id="A4QLN3"/>
<dbReference type="GeneID" id="4964894"/>
<dbReference type="GO" id="GO:0009507">
    <property type="term" value="C:chloroplast"/>
    <property type="evidence" value="ECO:0007669"/>
    <property type="project" value="UniProtKB-SubCell"/>
</dbReference>
<dbReference type="GO" id="GO:0015934">
    <property type="term" value="C:large ribosomal subunit"/>
    <property type="evidence" value="ECO:0007669"/>
    <property type="project" value="InterPro"/>
</dbReference>
<dbReference type="GO" id="GO:0019843">
    <property type="term" value="F:rRNA binding"/>
    <property type="evidence" value="ECO:0007669"/>
    <property type="project" value="UniProtKB-UniRule"/>
</dbReference>
<dbReference type="GO" id="GO:0003735">
    <property type="term" value="F:structural constituent of ribosome"/>
    <property type="evidence" value="ECO:0007669"/>
    <property type="project" value="InterPro"/>
</dbReference>
<dbReference type="GO" id="GO:0006412">
    <property type="term" value="P:translation"/>
    <property type="evidence" value="ECO:0007669"/>
    <property type="project" value="UniProtKB-UniRule"/>
</dbReference>
<dbReference type="CDD" id="cd00336">
    <property type="entry name" value="Ribosomal_L22"/>
    <property type="match status" value="1"/>
</dbReference>
<dbReference type="FunFam" id="3.90.470.10:FF:000006">
    <property type="entry name" value="50S ribosomal protein L22, chloroplastic"/>
    <property type="match status" value="1"/>
</dbReference>
<dbReference type="Gene3D" id="3.90.470.10">
    <property type="entry name" value="Ribosomal protein L22/L17"/>
    <property type="match status" value="1"/>
</dbReference>
<dbReference type="HAMAP" id="MF_01331_B">
    <property type="entry name" value="Ribosomal_uL22_B"/>
    <property type="match status" value="1"/>
</dbReference>
<dbReference type="InterPro" id="IPR001063">
    <property type="entry name" value="Ribosomal_uL22"/>
</dbReference>
<dbReference type="InterPro" id="IPR005727">
    <property type="entry name" value="Ribosomal_uL22_bac/chlpt-type"/>
</dbReference>
<dbReference type="InterPro" id="IPR047867">
    <property type="entry name" value="Ribosomal_uL22_bac/org-type"/>
</dbReference>
<dbReference type="InterPro" id="IPR018260">
    <property type="entry name" value="Ribosomal_uL22_CS"/>
</dbReference>
<dbReference type="InterPro" id="IPR036394">
    <property type="entry name" value="Ribosomal_uL22_sf"/>
</dbReference>
<dbReference type="NCBIfam" id="TIGR01044">
    <property type="entry name" value="rplV_bact"/>
    <property type="match status" value="1"/>
</dbReference>
<dbReference type="PANTHER" id="PTHR13501">
    <property type="entry name" value="CHLOROPLAST 50S RIBOSOMAL PROTEIN L22-RELATED"/>
    <property type="match status" value="1"/>
</dbReference>
<dbReference type="PANTHER" id="PTHR13501:SF10">
    <property type="entry name" value="LARGE RIBOSOMAL SUBUNIT PROTEIN UL22M"/>
    <property type="match status" value="1"/>
</dbReference>
<dbReference type="Pfam" id="PF00237">
    <property type="entry name" value="Ribosomal_L22"/>
    <property type="match status" value="1"/>
</dbReference>
<dbReference type="SUPFAM" id="SSF54843">
    <property type="entry name" value="Ribosomal protein L22"/>
    <property type="match status" value="1"/>
</dbReference>
<dbReference type="PROSITE" id="PS00464">
    <property type="entry name" value="RIBOSOMAL_L22"/>
    <property type="match status" value="1"/>
</dbReference>
<name>RK22_LOBMA</name>
<proteinExistence type="inferred from homology"/>
<organism>
    <name type="scientific">Lobularia maritima</name>
    <name type="common">Sweet alyssum</name>
    <name type="synonym">Alyssum maritimum</name>
    <dbReference type="NCBI Taxonomy" id="226051"/>
    <lineage>
        <taxon>Eukaryota</taxon>
        <taxon>Viridiplantae</taxon>
        <taxon>Streptophyta</taxon>
        <taxon>Embryophyta</taxon>
        <taxon>Tracheophyta</taxon>
        <taxon>Spermatophyta</taxon>
        <taxon>Magnoliopsida</taxon>
        <taxon>eudicotyledons</taxon>
        <taxon>Gunneridae</taxon>
        <taxon>Pentapetalae</taxon>
        <taxon>rosids</taxon>
        <taxon>malvids</taxon>
        <taxon>Brassicales</taxon>
        <taxon>Brassicaceae</taxon>
        <taxon>Anastaticeae</taxon>
        <taxon>Lobularia</taxon>
    </lineage>
</organism>
<gene>
    <name type="primary">rpl22</name>
</gene>
<accession>A4QLN3</accession>
<keyword id="KW-0150">Chloroplast</keyword>
<keyword id="KW-0934">Plastid</keyword>
<keyword id="KW-0687">Ribonucleoprotein</keyword>
<keyword id="KW-0689">Ribosomal protein</keyword>
<keyword id="KW-0694">RNA-binding</keyword>
<keyword id="KW-0699">rRNA-binding</keyword>
<comment type="function">
    <text evidence="1">This protein binds specifically to 23S rRNA.</text>
</comment>
<comment type="function">
    <text evidence="1">The globular domain of the protein is located near the polypeptide exit tunnel on the outside of the subunit, while an extended beta-hairpin is found that lines the wall of the exit tunnel in the center of the 70S ribosome.</text>
</comment>
<comment type="subunit">
    <text evidence="1">Part of the 50S ribosomal subunit.</text>
</comment>
<comment type="subcellular location">
    <subcellularLocation>
        <location>Plastid</location>
        <location>Chloroplast</location>
    </subcellularLocation>
</comment>
<comment type="similarity">
    <text evidence="2">Belongs to the universal ribosomal protein uL22 family.</text>
</comment>